<gene>
    <name type="primary">UL121</name>
</gene>
<feature type="signal peptide" evidence="1">
    <location>
        <begin position="1"/>
        <end position="27"/>
    </location>
</feature>
<feature type="chain" id="PRO_0000416447" description="Membrane protein UL121">
    <location>
        <begin position="28"/>
        <end position="180"/>
    </location>
</feature>
<feature type="transmembrane region" description="Helical" evidence="1">
    <location>
        <begin position="143"/>
        <end position="163"/>
    </location>
</feature>
<comment type="subcellular location">
    <subcellularLocation>
        <location evidence="2">Host membrane</location>
        <topology evidence="2">Single-pass type I membrane protein</topology>
    </subcellularLocation>
</comment>
<comment type="similarity">
    <text evidence="2">Belongs to the HHV-5 UL121 protein family.</text>
</comment>
<organism>
    <name type="scientific">Human cytomegalovirus (strain Merlin)</name>
    <name type="common">HHV-5</name>
    <name type="synonym">Human herpesvirus 5</name>
    <dbReference type="NCBI Taxonomy" id="295027"/>
    <lineage>
        <taxon>Viruses</taxon>
        <taxon>Duplodnaviria</taxon>
        <taxon>Heunggongvirae</taxon>
        <taxon>Peploviricota</taxon>
        <taxon>Herviviricetes</taxon>
        <taxon>Herpesvirales</taxon>
        <taxon>Orthoherpesviridae</taxon>
        <taxon>Betaherpesvirinae</taxon>
        <taxon>Cytomegalovirus</taxon>
        <taxon>Cytomegalovirus humanbeta5</taxon>
        <taxon>Human cytomegalovirus</taxon>
    </lineage>
</organism>
<organismHost>
    <name type="scientific">Homo sapiens</name>
    <name type="common">Human</name>
    <dbReference type="NCBI Taxonomy" id="9606"/>
</organismHost>
<reference key="1">
    <citation type="journal article" date="2004" name="J. Gen. Virol.">
        <title>Genetic content of wild-type human cytomegalovirus.</title>
        <authorList>
            <person name="Dolan A."/>
            <person name="Cunningham C."/>
            <person name="Hector R.D."/>
            <person name="Hassan-Walker A.F."/>
            <person name="Lee L."/>
            <person name="Addison C."/>
            <person name="Dargan D.J."/>
            <person name="McGeoch D.J."/>
            <person name="Gatherer D."/>
            <person name="Emery V.C."/>
            <person name="Griffiths P.D."/>
            <person name="Sinzger C."/>
            <person name="McSharry B.P."/>
            <person name="Wilkinson G.W.G."/>
            <person name="Davison A.J."/>
        </authorList>
    </citation>
    <scope>NUCLEOTIDE SEQUENCE [LARGE SCALE GENOMIC DNA]</scope>
</reference>
<keyword id="KW-1043">Host membrane</keyword>
<keyword id="KW-0472">Membrane</keyword>
<keyword id="KW-1185">Reference proteome</keyword>
<keyword id="KW-0732">Signal</keyword>
<keyword id="KW-0812">Transmembrane</keyword>
<keyword id="KW-1133">Transmembrane helix</keyword>
<name>UL121_HCMVM</name>
<proteinExistence type="inferred from homology"/>
<accession>F5HD27</accession>
<evidence type="ECO:0000255" key="1"/>
<evidence type="ECO:0000305" key="2"/>
<dbReference type="EMBL" id="AY446894">
    <property type="protein sequence ID" value="AAR31664.1"/>
    <property type="molecule type" value="Genomic_DNA"/>
</dbReference>
<dbReference type="RefSeq" id="YP_081560.1">
    <property type="nucleotide sequence ID" value="NC_006273.2"/>
</dbReference>
<dbReference type="GeneID" id="3077529"/>
<dbReference type="KEGG" id="vg:3077529"/>
<dbReference type="Reactome" id="R-HSA-9610379">
    <property type="pathway name" value="HCMV Late Events"/>
</dbReference>
<dbReference type="Proteomes" id="UP000000938">
    <property type="component" value="Segment"/>
</dbReference>
<dbReference type="GO" id="GO:0033644">
    <property type="term" value="C:host cell membrane"/>
    <property type="evidence" value="ECO:0007669"/>
    <property type="project" value="UniProtKB-SubCell"/>
</dbReference>
<dbReference type="GO" id="GO:0016020">
    <property type="term" value="C:membrane"/>
    <property type="evidence" value="ECO:0007669"/>
    <property type="project" value="UniProtKB-KW"/>
</dbReference>
<dbReference type="InterPro" id="IPR022545">
    <property type="entry name" value="HHV_UL121"/>
</dbReference>
<dbReference type="Pfam" id="PF10838">
    <property type="entry name" value="DUF2677"/>
    <property type="match status" value="1"/>
</dbReference>
<protein>
    <recommendedName>
        <fullName>Membrane protein UL121</fullName>
    </recommendedName>
</protein>
<sequence length="180" mass="20253">MWGCGWSRILVLLLLMCMALMARGTYGAYICSPNPGRLRISCALSVLDQRLWWEIQYSSGRLTRVLVFHDEGEEGDDVHLTDTHHCTSCTHPYVISLVTPLTINATLRLLIRDGMYGRGEKELCIAHLPTLRDIRTCRVDADLGLLYAVCLILSFSIVTAALWKVDYDRSVAVVSKSYKS</sequence>